<dbReference type="EMBL" id="AF025996">
    <property type="protein sequence ID" value="AAC48783.1"/>
    <property type="molecule type" value="mRNA"/>
</dbReference>
<dbReference type="EMBL" id="AAFC03127701">
    <property type="status" value="NOT_ANNOTATED_CDS"/>
    <property type="molecule type" value="Genomic_DNA"/>
</dbReference>
<dbReference type="EMBL" id="AAFC03076280">
    <property type="status" value="NOT_ANNOTATED_CDS"/>
    <property type="molecule type" value="Genomic_DNA"/>
</dbReference>
<dbReference type="EMBL" id="AAFC03076281">
    <property type="status" value="NOT_ANNOTATED_CDS"/>
    <property type="molecule type" value="Genomic_DNA"/>
</dbReference>
<dbReference type="EMBL" id="AAFC03076282">
    <property type="status" value="NOT_ANNOTATED_CDS"/>
    <property type="molecule type" value="Genomic_DNA"/>
</dbReference>
<dbReference type="EMBL" id="DV816343">
    <property type="status" value="NOT_ANNOTATED_CDS"/>
    <property type="molecule type" value="mRNA"/>
</dbReference>
<dbReference type="PIR" id="T08878">
    <property type="entry name" value="T08878"/>
</dbReference>
<dbReference type="RefSeq" id="NP_776615.1">
    <molecule id="O46385-2"/>
    <property type="nucleotide sequence ID" value="NM_174190.2"/>
</dbReference>
<dbReference type="RefSeq" id="XP_024856060.1">
    <molecule id="O46385-2"/>
    <property type="nucleotide sequence ID" value="XM_025000292.2"/>
</dbReference>
<dbReference type="RefSeq" id="XP_059748356.1">
    <molecule id="O46385-2"/>
    <property type="nucleotide sequence ID" value="XM_059892373.1"/>
</dbReference>
<dbReference type="RefSeq" id="XP_059748358.1">
    <molecule id="O46385-2"/>
    <property type="nucleotide sequence ID" value="XM_059892375.1"/>
</dbReference>
<dbReference type="RefSeq" id="XP_059748359.1">
    <molecule id="O46385-2"/>
    <property type="nucleotide sequence ID" value="XM_059892376.1"/>
</dbReference>
<dbReference type="RefSeq" id="XP_059748360.1">
    <molecule id="O46385-2"/>
    <property type="nucleotide sequence ID" value="XM_059892377.1"/>
</dbReference>
<dbReference type="RefSeq" id="XP_059748361.1">
    <molecule id="O46385-2"/>
    <property type="nucleotide sequence ID" value="XM_059892378.1"/>
</dbReference>
<dbReference type="RefSeq" id="XP_059748362.1">
    <molecule id="O46385-2"/>
    <property type="nucleotide sequence ID" value="XM_059892379.1"/>
</dbReference>
<dbReference type="RefSeq" id="XP_059748363.1">
    <molecule id="O46385-2"/>
    <property type="nucleotide sequence ID" value="XM_059892380.1"/>
</dbReference>
<dbReference type="BMRB" id="O46385"/>
<dbReference type="SMR" id="O46385"/>
<dbReference type="FunCoup" id="O46385">
    <property type="interactions" value="396"/>
</dbReference>
<dbReference type="IntAct" id="O46385">
    <property type="interactions" value="50"/>
</dbReference>
<dbReference type="MINT" id="O46385"/>
<dbReference type="STRING" id="9913.ENSBTAP00000049248"/>
<dbReference type="PaxDb" id="9913-ENSBTAP00000049248"/>
<dbReference type="GeneID" id="281509"/>
<dbReference type="KEGG" id="bta:281509"/>
<dbReference type="CTD" id="6840"/>
<dbReference type="VEuPathDB" id="HostDB:ENSBTAG00000027444"/>
<dbReference type="eggNOG" id="KOG0445">
    <property type="taxonomic scope" value="Eukaryota"/>
</dbReference>
<dbReference type="InParanoid" id="O46385"/>
<dbReference type="OrthoDB" id="28894at2759"/>
<dbReference type="Proteomes" id="UP000009136">
    <property type="component" value="Chromosome 13"/>
</dbReference>
<dbReference type="Bgee" id="ENSBTAG00000027444">
    <property type="expression patterns" value="Expressed in supraspinatus muscle and 107 other cell types or tissues"/>
</dbReference>
<dbReference type="GO" id="GO:0015629">
    <property type="term" value="C:actin cytoskeleton"/>
    <property type="evidence" value="ECO:0000318"/>
    <property type="project" value="GO_Central"/>
</dbReference>
<dbReference type="GO" id="GO:0070161">
    <property type="term" value="C:anchoring junction"/>
    <property type="evidence" value="ECO:0007669"/>
    <property type="project" value="UniProtKB-KW"/>
</dbReference>
<dbReference type="GO" id="GO:0042995">
    <property type="term" value="C:cell projection"/>
    <property type="evidence" value="ECO:0007669"/>
    <property type="project" value="UniProtKB-SubCell"/>
</dbReference>
<dbReference type="GO" id="GO:0032154">
    <property type="term" value="C:cleavage furrow"/>
    <property type="evidence" value="ECO:0000314"/>
    <property type="project" value="UniProtKB"/>
</dbReference>
<dbReference type="GO" id="GO:0005737">
    <property type="term" value="C:cytoplasm"/>
    <property type="evidence" value="ECO:0000318"/>
    <property type="project" value="GO_Central"/>
</dbReference>
<dbReference type="GO" id="GO:0036449">
    <property type="term" value="C:microtubule minus-end"/>
    <property type="evidence" value="ECO:0000314"/>
    <property type="project" value="UniProtKB"/>
</dbReference>
<dbReference type="GO" id="GO:0030496">
    <property type="term" value="C:midbody"/>
    <property type="evidence" value="ECO:0000314"/>
    <property type="project" value="UniProtKB"/>
</dbReference>
<dbReference type="GO" id="GO:0002102">
    <property type="term" value="C:podosome"/>
    <property type="evidence" value="ECO:0007669"/>
    <property type="project" value="UniProtKB-SubCell"/>
</dbReference>
<dbReference type="GO" id="GO:0051015">
    <property type="term" value="F:actin filament binding"/>
    <property type="evidence" value="ECO:0000318"/>
    <property type="project" value="GO_Central"/>
</dbReference>
<dbReference type="GO" id="GO:0060090">
    <property type="term" value="F:molecular adaptor activity"/>
    <property type="evidence" value="ECO:0000314"/>
    <property type="project" value="DisProt"/>
</dbReference>
<dbReference type="GO" id="GO:0005546">
    <property type="term" value="F:phosphatidylinositol-4,5-bisphosphate binding"/>
    <property type="evidence" value="ECO:0000318"/>
    <property type="project" value="GO_Central"/>
</dbReference>
<dbReference type="GO" id="GO:0051014">
    <property type="term" value="P:actin filament severing"/>
    <property type="evidence" value="ECO:0000318"/>
    <property type="project" value="GO_Central"/>
</dbReference>
<dbReference type="GO" id="GO:0008154">
    <property type="term" value="P:actin polymerization or depolymerization"/>
    <property type="evidence" value="ECO:0000318"/>
    <property type="project" value="GO_Central"/>
</dbReference>
<dbReference type="GO" id="GO:0051016">
    <property type="term" value="P:barbed-end actin filament capping"/>
    <property type="evidence" value="ECO:0000318"/>
    <property type="project" value="GO_Central"/>
</dbReference>
<dbReference type="GO" id="GO:0032467">
    <property type="term" value="P:positive regulation of cytokinesis"/>
    <property type="evidence" value="ECO:0000315"/>
    <property type="project" value="UniProtKB"/>
</dbReference>
<dbReference type="CDD" id="cd11280">
    <property type="entry name" value="gelsolin_like"/>
    <property type="match status" value="1"/>
</dbReference>
<dbReference type="CDD" id="cd11289">
    <property type="entry name" value="gelsolin_S2_like"/>
    <property type="match status" value="1"/>
</dbReference>
<dbReference type="CDD" id="cd11293">
    <property type="entry name" value="gelsolin_S4_like"/>
    <property type="match status" value="1"/>
</dbReference>
<dbReference type="CDD" id="cd11288">
    <property type="entry name" value="gelsolin_S5_like"/>
    <property type="match status" value="1"/>
</dbReference>
<dbReference type="DisProt" id="DP02337"/>
<dbReference type="FunFam" id="3.40.20.10:FF:000017">
    <property type="entry name" value="Supervillin"/>
    <property type="match status" value="1"/>
</dbReference>
<dbReference type="FunFam" id="3.40.20.10:FF:000013">
    <property type="entry name" value="supervillin isoform X1"/>
    <property type="match status" value="1"/>
</dbReference>
<dbReference type="FunFam" id="1.10.950.10:FF:000003">
    <property type="entry name" value="supervillin isoform X2"/>
    <property type="match status" value="1"/>
</dbReference>
<dbReference type="FunFam" id="3.40.20.10:FF:000016">
    <property type="entry name" value="supervillin isoform X2"/>
    <property type="match status" value="1"/>
</dbReference>
<dbReference type="FunFam" id="3.40.20.10:FF:000022">
    <property type="entry name" value="supervillin isoform X2"/>
    <property type="match status" value="1"/>
</dbReference>
<dbReference type="Gene3D" id="3.40.20.10">
    <property type="entry name" value="Severin"/>
    <property type="match status" value="5"/>
</dbReference>
<dbReference type="Gene3D" id="1.10.950.10">
    <property type="entry name" value="Villin headpiece domain"/>
    <property type="match status" value="1"/>
</dbReference>
<dbReference type="InterPro" id="IPR029006">
    <property type="entry name" value="ADF-H/Gelsolin-like_dom_sf"/>
</dbReference>
<dbReference type="InterPro" id="IPR007123">
    <property type="entry name" value="Gelsolin-like_dom"/>
</dbReference>
<dbReference type="InterPro" id="IPR007122">
    <property type="entry name" value="Villin/Gelsolin"/>
</dbReference>
<dbReference type="InterPro" id="IPR003128">
    <property type="entry name" value="Villin_headpiece"/>
</dbReference>
<dbReference type="InterPro" id="IPR036886">
    <property type="entry name" value="Villin_headpiece_dom_sf"/>
</dbReference>
<dbReference type="PANTHER" id="PTHR11977:SF45">
    <property type="entry name" value="SUPERVILLIN"/>
    <property type="match status" value="1"/>
</dbReference>
<dbReference type="PANTHER" id="PTHR11977">
    <property type="entry name" value="VILLIN"/>
    <property type="match status" value="1"/>
</dbReference>
<dbReference type="Pfam" id="PF00626">
    <property type="entry name" value="Gelsolin"/>
    <property type="match status" value="1"/>
</dbReference>
<dbReference type="Pfam" id="PF02209">
    <property type="entry name" value="VHP"/>
    <property type="match status" value="1"/>
</dbReference>
<dbReference type="PRINTS" id="PR00597">
    <property type="entry name" value="GELSOLIN"/>
</dbReference>
<dbReference type="SMART" id="SM00262">
    <property type="entry name" value="GEL"/>
    <property type="match status" value="5"/>
</dbReference>
<dbReference type="SMART" id="SM00153">
    <property type="entry name" value="VHP"/>
    <property type="match status" value="1"/>
</dbReference>
<dbReference type="SUPFAM" id="SSF55753">
    <property type="entry name" value="Actin depolymerizing proteins"/>
    <property type="match status" value="5"/>
</dbReference>
<dbReference type="SUPFAM" id="SSF47050">
    <property type="entry name" value="VHP, Villin headpiece domain"/>
    <property type="match status" value="1"/>
</dbReference>
<dbReference type="PROSITE" id="PS51089">
    <property type="entry name" value="HP"/>
    <property type="match status" value="1"/>
</dbReference>
<keyword id="KW-0009">Actin-binding</keyword>
<keyword id="KW-0025">Alternative splicing</keyword>
<keyword id="KW-0106">Calcium</keyword>
<keyword id="KW-0965">Cell junction</keyword>
<keyword id="KW-1003">Cell membrane</keyword>
<keyword id="KW-0966">Cell projection</keyword>
<keyword id="KW-0963">Cytoplasm</keyword>
<keyword id="KW-0206">Cytoskeleton</keyword>
<keyword id="KW-0472">Membrane</keyword>
<keyword id="KW-0597">Phosphoprotein</keyword>
<keyword id="KW-1185">Reference proteome</keyword>
<keyword id="KW-0677">Repeat</keyword>
<feature type="chain" id="PRO_0000378515" description="Supervillin">
    <location>
        <begin position="1"/>
        <end position="2194"/>
    </location>
</feature>
<feature type="repeat" description="Gelsolin-like 1">
    <location>
        <begin position="1421"/>
        <end position="1520"/>
    </location>
</feature>
<feature type="repeat" description="Gelsolin-like 2">
    <location>
        <begin position="1540"/>
        <end position="1662"/>
    </location>
</feature>
<feature type="repeat" description="Gelsolin-like 3">
    <location>
        <begin position="1732"/>
        <end position="1842"/>
    </location>
</feature>
<feature type="repeat" description="Gelsolin-like 4">
    <location>
        <begin position="1861"/>
        <end position="1962"/>
    </location>
</feature>
<feature type="repeat" description="Gelsolin-like 5">
    <location>
        <begin position="1995"/>
        <end position="2102"/>
    </location>
</feature>
<feature type="domain" description="HP" evidence="4">
    <location>
        <begin position="2131"/>
        <end position="2194"/>
    </location>
</feature>
<feature type="region of interest" description="Interaction with MYLK">
    <location>
        <begin position="1"/>
        <end position="174"/>
    </location>
</feature>
<feature type="region of interest" description="Disordered" evidence="5">
    <location>
        <begin position="35"/>
        <end position="98"/>
    </location>
</feature>
<feature type="region of interest" description="Disordered" evidence="5">
    <location>
        <begin position="118"/>
        <end position="335"/>
    </location>
</feature>
<feature type="region of interest" description="Disordered" evidence="5">
    <location>
        <begin position="388"/>
        <end position="414"/>
    </location>
</feature>
<feature type="region of interest" description="Disordered" evidence="5">
    <location>
        <begin position="450"/>
        <end position="500"/>
    </location>
</feature>
<feature type="region of interest" description="Disordered" evidence="5">
    <location>
        <begin position="513"/>
        <end position="563"/>
    </location>
</feature>
<feature type="region of interest" description="Disordered" evidence="5">
    <location>
        <begin position="589"/>
        <end position="667"/>
    </location>
</feature>
<feature type="region of interest" description="Disordered" evidence="5">
    <location>
        <begin position="685"/>
        <end position="719"/>
    </location>
</feature>
<feature type="region of interest" description="Disordered" evidence="5">
    <location>
        <begin position="739"/>
        <end position="791"/>
    </location>
</feature>
<feature type="region of interest" description="Disordered" evidence="5">
    <location>
        <begin position="1036"/>
        <end position="1077"/>
    </location>
</feature>
<feature type="region of interest" description="Interaction with NEB" evidence="1">
    <location>
        <begin position="1399"/>
        <end position="1667"/>
    </location>
</feature>
<feature type="compositionally biased region" description="Polar residues" evidence="5">
    <location>
        <begin position="87"/>
        <end position="98"/>
    </location>
</feature>
<feature type="compositionally biased region" description="Basic and acidic residues" evidence="5">
    <location>
        <begin position="139"/>
        <end position="161"/>
    </location>
</feature>
<feature type="compositionally biased region" description="Basic and acidic residues" evidence="5">
    <location>
        <begin position="181"/>
        <end position="192"/>
    </location>
</feature>
<feature type="compositionally biased region" description="Basic and acidic residues" evidence="5">
    <location>
        <begin position="283"/>
        <end position="294"/>
    </location>
</feature>
<feature type="compositionally biased region" description="Basic and acidic residues" evidence="5">
    <location>
        <begin position="308"/>
        <end position="319"/>
    </location>
</feature>
<feature type="compositionally biased region" description="Polar residues" evidence="5">
    <location>
        <begin position="320"/>
        <end position="330"/>
    </location>
</feature>
<feature type="compositionally biased region" description="Polar residues" evidence="5">
    <location>
        <begin position="455"/>
        <end position="467"/>
    </location>
</feature>
<feature type="compositionally biased region" description="Low complexity" evidence="5">
    <location>
        <begin position="540"/>
        <end position="551"/>
    </location>
</feature>
<feature type="compositionally biased region" description="Basic and acidic residues" evidence="5">
    <location>
        <begin position="592"/>
        <end position="615"/>
    </location>
</feature>
<feature type="compositionally biased region" description="Basic and acidic residues" evidence="5">
    <location>
        <begin position="626"/>
        <end position="635"/>
    </location>
</feature>
<feature type="compositionally biased region" description="Basic and acidic residues" evidence="5">
    <location>
        <begin position="704"/>
        <end position="714"/>
    </location>
</feature>
<feature type="compositionally biased region" description="Basic and acidic residues" evidence="5">
    <location>
        <begin position="770"/>
        <end position="782"/>
    </location>
</feature>
<feature type="compositionally biased region" description="Low complexity" evidence="5">
    <location>
        <begin position="1045"/>
        <end position="1059"/>
    </location>
</feature>
<feature type="modified residue" description="Phosphoserine" evidence="2">
    <location>
        <position position="50"/>
    </location>
</feature>
<feature type="modified residue" description="Phosphoserine" evidence="2">
    <location>
        <position position="245"/>
    </location>
</feature>
<feature type="modified residue" description="Phosphoserine" evidence="3">
    <location>
        <position position="262"/>
    </location>
</feature>
<feature type="modified residue" description="Phosphoserine" evidence="3">
    <location>
        <position position="321"/>
    </location>
</feature>
<feature type="modified residue" description="Phosphoserine" evidence="3">
    <location>
        <position position="322"/>
    </location>
</feature>
<feature type="modified residue" description="Phosphoserine" evidence="3">
    <location>
        <position position="652"/>
    </location>
</feature>
<feature type="modified residue" description="Phosphoserine" evidence="2">
    <location>
        <position position="686"/>
    </location>
</feature>
<feature type="modified residue" description="Phosphoserine" evidence="2">
    <location>
        <position position="747"/>
    </location>
</feature>
<feature type="modified residue" description="Phosphoserine" evidence="3">
    <location>
        <position position="781"/>
    </location>
</feature>
<feature type="modified residue" description="Phosphotyrosine" evidence="3">
    <location>
        <position position="829"/>
    </location>
</feature>
<feature type="modified residue" description="Phosphothreonine" evidence="2">
    <location>
        <position position="831"/>
    </location>
</feature>
<feature type="modified residue" description="Phosphoserine" evidence="2">
    <location>
        <position position="893"/>
    </location>
</feature>
<feature type="modified residue" description="Phosphoserine" evidence="2">
    <location>
        <position position="899"/>
    </location>
</feature>
<feature type="modified residue" description="Phosphoserine" evidence="2">
    <location>
        <position position="903"/>
    </location>
</feature>
<feature type="modified residue" description="Phosphoserine" evidence="2">
    <location>
        <position position="947"/>
    </location>
</feature>
<feature type="modified residue" description="Phosphoserine" evidence="3">
    <location>
        <position position="979"/>
    </location>
</feature>
<feature type="modified residue" description="Phosphoserine" evidence="3">
    <location>
        <position position="1031"/>
    </location>
</feature>
<feature type="modified residue" description="Phosphoserine" evidence="2">
    <location>
        <position position="1099"/>
    </location>
</feature>
<feature type="modified residue" description="Phosphoserine" evidence="2">
    <location>
        <position position="1205"/>
    </location>
</feature>
<feature type="modified residue" description="Phosphothreonine" evidence="2">
    <location>
        <position position="1210"/>
    </location>
</feature>
<feature type="modified residue" description="Phosphoserine" evidence="3">
    <location>
        <position position="1214"/>
    </location>
</feature>
<feature type="modified residue" description="Phosphoserine" evidence="2">
    <location>
        <position position="1302"/>
    </location>
</feature>
<feature type="modified residue" description="Phosphoserine" evidence="3">
    <location>
        <position position="1385"/>
    </location>
</feature>
<feature type="splice variant" id="VSP_037598" description="In isoform 2." evidence="11">
    <location>
        <begin position="279"/>
        <end position="648"/>
    </location>
</feature>
<feature type="splice variant" id="VSP_037599" description="In isoform 2." evidence="11">
    <location>
        <begin position="728"/>
        <end position="759"/>
    </location>
</feature>
<feature type="mutagenesis site" description="Diminishes interaction with TRIP6 and DYNLT1." evidence="7">
    <original>RY</original>
    <variation>AA</variation>
    <location>
        <begin position="828"/>
        <end position="829"/>
    </location>
</feature>
<name>SVIL_BOVIN</name>
<protein>
    <recommendedName>
        <fullName evidence="11">Supervillin</fullName>
    </recommendedName>
    <alternativeName>
        <fullName evidence="2">Archvillin</fullName>
    </alternativeName>
    <alternativeName>
        <fullName evidence="11">p205/p250</fullName>
    </alternativeName>
</protein>
<evidence type="ECO:0000250" key="1"/>
<evidence type="ECO:0000250" key="2">
    <source>
        <dbReference type="UniProtKB" id="O95425"/>
    </source>
</evidence>
<evidence type="ECO:0000250" key="3">
    <source>
        <dbReference type="UniProtKB" id="Q8K4L3"/>
    </source>
</evidence>
<evidence type="ECO:0000255" key="4">
    <source>
        <dbReference type="PROSITE-ProRule" id="PRU00595"/>
    </source>
</evidence>
<evidence type="ECO:0000256" key="5">
    <source>
        <dbReference type="SAM" id="MobiDB-lite"/>
    </source>
</evidence>
<evidence type="ECO:0000269" key="6">
    <source>
    </source>
</evidence>
<evidence type="ECO:0000269" key="7">
    <source>
    </source>
</evidence>
<evidence type="ECO:0000269" key="8">
    <source>
    </source>
</evidence>
<evidence type="ECO:0000269" key="9">
    <source>
    </source>
</evidence>
<evidence type="ECO:0000269" key="10">
    <source>
    </source>
</evidence>
<evidence type="ECO:0000303" key="11">
    <source>
    </source>
</evidence>
<evidence type="ECO:0000305" key="12"/>
<accession>O46385</accession>
<gene>
    <name evidence="11" type="primary">SVIL</name>
</gene>
<reference key="1">
    <citation type="journal article" date="1997" name="J. Cell Biol.">
        <title>Supervillin (p205): A novel membrane-associated, F-actin-binding protein in the villin/gelsolin superfamily.</title>
        <authorList>
            <person name="Pestonjamasp K.N."/>
            <person name="Pope R.K."/>
            <person name="Wulfkuhle J.D."/>
            <person name="Luna E.J."/>
        </authorList>
    </citation>
    <scope>NUCLEOTIDE SEQUENCE [MRNA] (ISOFORM 2)</scope>
    <scope>SUBCELLULAR LOCATION</scope>
    <scope>INTERACTION WITH ACTIN</scope>
</reference>
<reference key="2">
    <citation type="journal article" date="2009" name="Science">
        <title>The genome sequence of taurine cattle: a window to ruminant biology and evolution.</title>
        <authorList>
            <consortium name="The bovine genome sequencing and analysis consortium"/>
        </authorList>
    </citation>
    <scope>NUCLEOTIDE SEQUENCE [LARGE SCALE GENOMIC DNA]</scope>
    <source>
        <strain>Hereford</strain>
    </source>
</reference>
<reference key="3">
    <citation type="submission" date="2005-12" db="EMBL/GenBank/DDBJ databases">
        <title>Bovine genome sequencing program: full-length cDNA sequencing.</title>
        <authorList>
            <person name="Moore S."/>
            <person name="Alexander L."/>
            <person name="Brownstein M."/>
            <person name="Guan L."/>
            <person name="Lobo S."/>
            <person name="Meng Y."/>
            <person name="Tanaguchi M."/>
            <person name="Wang Z."/>
            <person name="Yu J."/>
            <person name="Prange C."/>
            <person name="Schreiber K."/>
            <person name="Shenmen C."/>
            <person name="Wagner L."/>
            <person name="Bala M."/>
            <person name="Barbazuk S."/>
            <person name="Barber S."/>
            <person name="Babakaiff R."/>
            <person name="Beland J."/>
            <person name="Chun E."/>
            <person name="Del Rio L."/>
            <person name="Gibson S."/>
            <person name="Hanson R."/>
            <person name="Kirkpatrick R."/>
            <person name="Liu J."/>
            <person name="Matsuo C."/>
            <person name="Mayo M."/>
            <person name="Santos R.R."/>
            <person name="Stott J."/>
            <person name="Tsai M."/>
            <person name="Wong D."/>
            <person name="Siddiqui A."/>
            <person name="Holt R."/>
            <person name="Jones S.J."/>
            <person name="Marra M.A."/>
        </authorList>
    </citation>
    <scope>NUCLEOTIDE SEQUENCE [LARGE SCALE MRNA] OF 448-712 (ISOFORM 1)</scope>
</reference>
<reference key="4">
    <citation type="journal article" date="2002" name="J. Biol. Chem.">
        <title>Proteomic analysis of a detergent-resistant membrane skeleton from neutrophil plasma membranes.</title>
        <authorList>
            <person name="Nebl T."/>
            <person name="Pestonjamasp K.N."/>
            <person name="Leszyk J.D."/>
            <person name="Crowley J.L."/>
            <person name="Oh S.W."/>
            <person name="Luna E.J."/>
        </authorList>
    </citation>
    <scope>SUBCELLULAR LOCATION</scope>
    <scope>IDENTIFICATION BY MASS SPECTROMETRY</scope>
</reference>
<reference key="5">
    <citation type="journal article" date="2003" name="J. Biol. Chem.">
        <title>F-actin and myosin II binding domains in supervillin.</title>
        <authorList>
            <person name="Chen Y."/>
            <person name="Takizawa N."/>
            <person name="Crowley J.L."/>
            <person name="Oh S.W."/>
            <person name="Gatto C.L."/>
            <person name="Kambara T."/>
            <person name="Sato O."/>
            <person name="Li X.-D."/>
            <person name="Ikebe M."/>
            <person name="Luna E.J."/>
        </authorList>
    </citation>
    <scope>INTERACTION WITH MYH9</scope>
</reference>
<reference key="6">
    <citation type="journal article" date="2006" name="J. Cell Biol.">
        <title>Supervillin modulation of focal adhesions involving TRIP6/ZRP-1.</title>
        <authorList>
            <person name="Takizawa N."/>
            <person name="Smith T.C."/>
            <person name="Nebl T."/>
            <person name="Crowley J.L."/>
            <person name="Palmieri S.J."/>
            <person name="Lifshitz L.M."/>
            <person name="Ehrhardt A.G."/>
            <person name="Hoffman L.M."/>
            <person name="Beckerle M.C."/>
            <person name="Luna E.J."/>
        </authorList>
    </citation>
    <scope>FUNCTION (ISOFORM 2)</scope>
    <scope>INTERACTION WITH TRIP6 AND DYNLT1 (ISOFORM 2)</scope>
    <scope>MUTAGENESIS OF 828-ARG-TYR-829</scope>
</reference>
<reference key="7">
    <citation type="journal article" date="2007" name="J. Cell Sci.">
        <title>Supervillin slows cell spreading by facilitating myosin II activation at the cell periphery.</title>
        <authorList>
            <person name="Takizawa N."/>
            <person name="Ikebe R."/>
            <person name="Ikebe M."/>
            <person name="Luna E.J."/>
        </authorList>
    </citation>
    <scope>FUNCTION (ISOFORM 2)</scope>
    <scope>INTERACTION WITH MLCK AND MYH9</scope>
</reference>
<reference key="8">
    <citation type="journal article" date="2010" name="Cytoskeleton">
        <title>Novel interactors and a role for supervillin in early cytokinesis.</title>
        <authorList>
            <person name="Smith T.C."/>
            <person name="Fang Z."/>
            <person name="Luna E.J."/>
        </authorList>
    </citation>
    <scope>FUNCTION (ISOFORM 2)</scope>
    <scope>INTERACTION WITH KIF14</scope>
    <scope>SUBCELLULAR LOCATION</scope>
</reference>
<sequence>MKRKERIARRLEGIETDTQPILLQSCTGLVTHRLLEEDTPRYMRATDPASPHIGRSNEEEETSDSSLEKQTRSKQCTETSGIHADSPYSSGIMDTQSLESKAERIARYKAERRRQLAEKYGLTLDPEADSETPSRYSRSRKDPEAAEKRGVRSERSAESSRDAGSSYSRTELSGLRTCVAESKDYGLHRSDGVSDTEVLLNAENQRRGQEPSATGLARDLPLAGEVSSSFSFSGRDSALGEVPRSPKAVHSLPSPSPGQPASPSHSTSDLPLPAEARASIGKPKHEWFLQKDSEGDTPSLINWPSRVKVREKLVREESARSSPELTSESLTQRRHQTAPGHYLAFQSENSAFDRVSGKVASSARQPIRGYVQPAEPVHTITLVTSDTPESISEGSWVGPAPQTVTKPPPSKVLEGERRDTPVLHICESKAEDVLFSDALEKTRKTLAVLEDRGSGRSQEAPSGTEDLSQPAVGIVTAEPQKESESLAHPPMAQQQPTERMGRSEMVMYVQSEAVSQGHRKEVPTRKHRVLTRSLSDYTGPPQLQALKAKAPAPKRDAESQTSKAELELGLLDTKVSVAQLRNAFLESARASRKPELHSRVEGSSEGPGVERERGSRKPRRYFSPGENRKTSERFRTQPITSAERKESDRSTSNSEMPAAEDEEKVDERARLSVAAKRLLFREMEKSFDEKSVPKRRSRNAAVEQRLRRLQDRSHTQPVTTEEVVIAAEPTPASCSVATHPVMTRHPSPTVAKSPVQPARTLQASAHQKALARDQTNESKDSAEQGEPDSSTLSLAEKLALFNKLSQPVSKAISTRNRLDMRQRRMNARYQTQPVTLGEVEQVQSGKLMAFSPTINTSVSTVASTVPPMYAGNLRTKPLPDDSFGATEQKFASSLENSDSPVRSILKSQGWQPSVEGAGSKAMLREFEETERKGGLTGGDGGVTKYGSFEEAELSYPVLSRVREGDNHKEAIYALPRKGSLELAHPPIAQLGDDLKEFSTPKSTMQASPDWKERQLFEEKVDLENVTKRKFSLKAAEFGEPTSEQTGAAAGKPAAPTATPVSWKPQDPSEQPQEKRYQSPCAMFAAGEIKAPAVEGSLDSPSKTMSIKERLALLKKSGEEDWRNRLNRKQEYGKASITSSLHIQETEQSLKKKRVTESRESQMTIEERKHLITVREDAWKTRGKGAANDSTQFTVAGRMVKRGLASPTAITPVASPVSSKARGTTPVSRPLEDIEARPDMQLESDLKLDRLETFLRRLNNKVGGMQETVLTVTGKSVKEVMKPDDDETFAKFYRSVDSSLPRSPVELDEDFDVIFDPYAPRLTSSVAEHKRAVRPKRRVQASKNPLKMLAAREDLLQEYTEQRLNVAFVESKRMKVEKLSANSSFSEVTLAGLASKENFSNVSLRSVNLTEQNSNNSAVPYKKLMLLQVKGRRHVQTRLVEPRAPSLNSGDCFLLLSPHHCFLWVGEFANVIEKAKASELASLIQTKRELGCRATYIQTVEEGINTHTHAAKDFWKLLGGQASYQSAGDPKEDELYETAIIETNCIYRLMDDKLVPDDDYWGKIPKCSLLQSKEVLVFDFGSEVYVWHGKEVTLAQRKIAFQLAKHLWNGTFDYENCDINPLDPGECNPLIPRKGQGRPDWAIFGRLTEHNETILFKEKFLDWTELKRPNEKNASELAQHKDDARAEVKPYDVTRMVPVPQTTAGTVLDGVNVGRGYGLVEGDDRRQFEIASISVDVWHILEFDYSRLPKQSIGQFHEGDAYVVKWKFIVSTAVGSRQKGEHSVRVAGKEKCVYFFWQGRQSTVSEKGTSALMTVELDEERGAQVQVLQGKEPPCFLQCFQGGMVVHSGRREEEEENTQSEWRLYCVRGEVPVEGNLLEVACHCSSLRSRTSMVVLNVHKALIYLWHGCKAQAHTKEVGRTAANKIKDQCPLEAGLHSSSKVTIHECDEGSEPLGFWDALGRRDRKAYDCMLQDPGNFNFTPRLFILSSSSGDFSATEFMYPARDPSVVNSMPFLQEDLYSAPQPALFLVDNHHEVYLWQGWWPIENKITGSARIRWASDRKSAMETVLQYCRGKNLKKPPPKSYLIHAGLEPLTFTNMFPSWEHREDIAEITEMDTEVSNQITLVEDVLAKLCKTIYPLADLLARPLPEGVDPLKLEIYLTDEDFEFALDMTRDEYNALPAWKQVNLKKAKGLF</sequence>
<comment type="function">
    <molecule>Isoform 1</molecule>
    <text evidence="2">Forms a high-affinity link between the actin cytoskeleton and the membrane. Is among the first costameric proteins to assemble during myogenesis and it contributes to myogenic membrane structure and differentiation. Appears to be involved in myosin II assembly. May modulate myosin II regulation through MLCK during cell spreading, an initial step in cell migration. May play a role in invadopodial function (By similarity).</text>
</comment>
<comment type="function">
    <molecule>Isoform 2</molecule>
    <text evidence="7 8 9">May be involved in modulation of focal adhesions. Supervillin-mediated down-regulation of focal adhesions involves binding to TRIP6 (PubMed:16880273, PubMed:17925381). Plays a role in cytokinesis through KIF14 interaction (PubMed:20309963).</text>
</comment>
<comment type="subunit">
    <text evidence="3 6 8 10">Associates with F-actin. Interacts with NEB (By similarity). Interacts with MYH9. Interacts with MYLK. Interacts with TASOR (By similarity).</text>
</comment>
<comment type="subunit">
    <molecule>Isoform 2</molecule>
    <text evidence="7 9">Interacts with TRIP6 and DYNLT1 (PubMed:16880273). Interacts with KIF14; at midbody during cytokinesis (PubMed:20309963).</text>
</comment>
<comment type="interaction">
    <interactant intactId="EBI-6995105">
        <id>O46385</id>
    </interactant>
    <interactant intactId="EBI-642797">
        <id>P51807</id>
        <label>Dynlt1</label>
    </interactant>
    <organismsDiffer>true</organismsDiffer>
    <experiments>4</experiments>
</comment>
<comment type="interaction">
    <interactant intactId="EBI-6995105">
        <id>O46385</id>
    </interactant>
    <interactant intactId="EBI-1045252">
        <id>Q15058</id>
        <label>KIF14</label>
    </interactant>
    <organismsDiffer>true</organismsDiffer>
    <experiments>3</experiments>
</comment>
<comment type="interaction">
    <interactant intactId="EBI-6995105">
        <id>O46385</id>
    </interactant>
    <interactant intactId="EBI-351479">
        <id>Q9UHB6</id>
        <label>LIMA1</label>
    </interactant>
    <organismsDiffer>true</organismsDiffer>
    <experiments>3</experiments>
</comment>
<comment type="interaction">
    <interactant intactId="EBI-6995105">
        <id>O46385</id>
    </interactant>
    <interactant intactId="EBI-350338">
        <id>P35579</id>
        <label>MYH9</label>
    </interactant>
    <organismsDiffer>true</organismsDiffer>
    <experiments>2</experiments>
</comment>
<comment type="interaction">
    <interactant intactId="EBI-6995105">
        <id>O46385</id>
    </interactant>
    <interactant intactId="EBI-742327">
        <id>Q15654</id>
        <label>TRIP6</label>
    </interactant>
    <organismsDiffer>true</organismsDiffer>
    <experiments>5</experiments>
</comment>
<comment type="interaction">
    <interactant intactId="EBI-6995105">
        <id>O46385</id>
    </interactant>
    <interactant intactId="EBI-6995234">
        <id>Q7LZ83</id>
    </interactant>
    <organismsDiffer>true</organismsDiffer>
    <experiments>2</experiments>
</comment>
<comment type="subcellular location">
    <subcellularLocation>
        <location>Cell membrane</location>
        <topology>Peripheral membrane protein</topology>
        <orientation>Cytoplasmic side</orientation>
    </subcellularLocation>
    <subcellularLocation>
        <location>Cytoplasm</location>
        <location>Cytoskeleton</location>
    </subcellularLocation>
    <subcellularLocation>
        <location evidence="2">Cell projection</location>
        <location evidence="2">Invadopodium</location>
    </subcellularLocation>
    <subcellularLocation>
        <location evidence="2">Cell projection</location>
        <location evidence="2">Podosome</location>
    </subcellularLocation>
    <subcellularLocation>
        <location evidence="9">Midbody</location>
    </subcellularLocation>
    <subcellularLocation>
        <location evidence="9">Cleavage furrow</location>
    </subcellularLocation>
    <text>Tightly associated with both actin filaments and plasma membranes.</text>
</comment>
<comment type="alternative products">
    <event type="alternative splicing"/>
    <isoform>
        <id>O46385-1</id>
        <name>1</name>
        <name evidence="2">Archvillin</name>
        <name evidence="2">p250</name>
        <sequence type="displayed"/>
    </isoform>
    <isoform>
        <id>O46385-2</id>
        <name>2</name>
        <name evidence="11">Supervillin</name>
        <name evidence="11">p205</name>
        <sequence type="described" ref="VSP_037598 VSP_037599"/>
    </isoform>
</comment>
<comment type="domain">
    <text evidence="1">As opposed to other villin-type headpiece domains, supervillin HP (SVHP) doesn't bind F-actin due to the absence of a conformationally flexible region (V-loop).</text>
</comment>
<comment type="similarity">
    <text evidence="12">Belongs to the villin/gelsolin family.</text>
</comment>
<organism>
    <name type="scientific">Bos taurus</name>
    <name type="common">Bovine</name>
    <dbReference type="NCBI Taxonomy" id="9913"/>
    <lineage>
        <taxon>Eukaryota</taxon>
        <taxon>Metazoa</taxon>
        <taxon>Chordata</taxon>
        <taxon>Craniata</taxon>
        <taxon>Vertebrata</taxon>
        <taxon>Euteleostomi</taxon>
        <taxon>Mammalia</taxon>
        <taxon>Eutheria</taxon>
        <taxon>Laurasiatheria</taxon>
        <taxon>Artiodactyla</taxon>
        <taxon>Ruminantia</taxon>
        <taxon>Pecora</taxon>
        <taxon>Bovidae</taxon>
        <taxon>Bovinae</taxon>
        <taxon>Bos</taxon>
    </lineage>
</organism>
<proteinExistence type="evidence at protein level"/>